<keyword id="KW-0067">ATP-binding</keyword>
<keyword id="KW-0963">Cytoplasm</keyword>
<keyword id="KW-0520">NAD</keyword>
<keyword id="KW-0547">Nucleotide-binding</keyword>
<keyword id="KW-0548">Nucleotidyltransferase</keyword>
<keyword id="KW-0662">Pyridine nucleotide biosynthesis</keyword>
<keyword id="KW-1185">Reference proteome</keyword>
<keyword id="KW-0808">Transferase</keyword>
<feature type="chain" id="PRO_0000134989" description="Nicotinamide-nucleotide adenylyltransferase">
    <location>
        <begin position="1"/>
        <end position="188"/>
    </location>
</feature>
<feature type="region of interest" description="Disordered" evidence="2">
    <location>
        <begin position="166"/>
        <end position="188"/>
    </location>
</feature>
<gene>
    <name type="ordered locus">rrnAC1913</name>
</gene>
<name>NADM_HALMA</name>
<accession>Q5V117</accession>
<organism>
    <name type="scientific">Haloarcula marismortui (strain ATCC 43049 / DSM 3752 / JCM 8966 / VKM B-1809)</name>
    <name type="common">Halobacterium marismortui</name>
    <dbReference type="NCBI Taxonomy" id="272569"/>
    <lineage>
        <taxon>Archaea</taxon>
        <taxon>Methanobacteriati</taxon>
        <taxon>Methanobacteriota</taxon>
        <taxon>Stenosarchaea group</taxon>
        <taxon>Halobacteria</taxon>
        <taxon>Halobacteriales</taxon>
        <taxon>Haloarculaceae</taxon>
        <taxon>Haloarcula</taxon>
    </lineage>
</organism>
<proteinExistence type="inferred from homology"/>
<dbReference type="EC" id="2.7.7.1" evidence="1"/>
<dbReference type="EMBL" id="AY596297">
    <property type="protein sequence ID" value="AAV46786.1"/>
    <property type="molecule type" value="Genomic_DNA"/>
</dbReference>
<dbReference type="RefSeq" id="WP_004958079.1">
    <property type="nucleotide sequence ID" value="NZ_CP039138.1"/>
</dbReference>
<dbReference type="SMR" id="Q5V117"/>
<dbReference type="STRING" id="272569.rrnAC1913"/>
<dbReference type="PaxDb" id="272569-rrnAC1913"/>
<dbReference type="EnsemblBacteria" id="AAV46786">
    <property type="protein sequence ID" value="AAV46786"/>
    <property type="gene ID" value="rrnAC1913"/>
</dbReference>
<dbReference type="KEGG" id="hma:rrnAC1913"/>
<dbReference type="PATRIC" id="fig|272569.17.peg.2570"/>
<dbReference type="eggNOG" id="arCOG00972">
    <property type="taxonomic scope" value="Archaea"/>
</dbReference>
<dbReference type="HOGENOM" id="CLU_108783_0_0_2"/>
<dbReference type="UniPathway" id="UPA00253">
    <property type="reaction ID" value="UER00600"/>
</dbReference>
<dbReference type="Proteomes" id="UP000001169">
    <property type="component" value="Chromosome I"/>
</dbReference>
<dbReference type="GO" id="GO:0005737">
    <property type="term" value="C:cytoplasm"/>
    <property type="evidence" value="ECO:0007669"/>
    <property type="project" value="UniProtKB-SubCell"/>
</dbReference>
<dbReference type="GO" id="GO:0005524">
    <property type="term" value="F:ATP binding"/>
    <property type="evidence" value="ECO:0007669"/>
    <property type="project" value="UniProtKB-KW"/>
</dbReference>
<dbReference type="GO" id="GO:0000309">
    <property type="term" value="F:nicotinamide-nucleotide adenylyltransferase activity"/>
    <property type="evidence" value="ECO:0007669"/>
    <property type="project" value="UniProtKB-UniRule"/>
</dbReference>
<dbReference type="GO" id="GO:0009435">
    <property type="term" value="P:NAD biosynthetic process"/>
    <property type="evidence" value="ECO:0007669"/>
    <property type="project" value="UniProtKB-UniRule"/>
</dbReference>
<dbReference type="CDD" id="cd02166">
    <property type="entry name" value="NMNAT_Archaea"/>
    <property type="match status" value="1"/>
</dbReference>
<dbReference type="Gene3D" id="3.40.50.620">
    <property type="entry name" value="HUPs"/>
    <property type="match status" value="1"/>
</dbReference>
<dbReference type="HAMAP" id="MF_00243">
    <property type="entry name" value="NMN_adenylyltr"/>
    <property type="match status" value="1"/>
</dbReference>
<dbReference type="InterPro" id="IPR004821">
    <property type="entry name" value="Cyt_trans-like"/>
</dbReference>
<dbReference type="InterPro" id="IPR006418">
    <property type="entry name" value="NMN_Atrans_arc"/>
</dbReference>
<dbReference type="InterPro" id="IPR014729">
    <property type="entry name" value="Rossmann-like_a/b/a_fold"/>
</dbReference>
<dbReference type="NCBIfam" id="TIGR01527">
    <property type="entry name" value="arch_NMN_Atrans"/>
    <property type="match status" value="1"/>
</dbReference>
<dbReference type="NCBIfam" id="TIGR00125">
    <property type="entry name" value="cyt_tran_rel"/>
    <property type="match status" value="1"/>
</dbReference>
<dbReference type="NCBIfam" id="NF002243">
    <property type="entry name" value="PRK01153.1"/>
    <property type="match status" value="1"/>
</dbReference>
<dbReference type="PANTHER" id="PTHR21342:SF0">
    <property type="entry name" value="BIFUNCTIONAL NMN ADENYLYLTRANSFERASE_NUDIX HYDROLASE"/>
    <property type="match status" value="1"/>
</dbReference>
<dbReference type="PANTHER" id="PTHR21342">
    <property type="entry name" value="PHOSPHOPANTETHEINE ADENYLYLTRANSFERASE"/>
    <property type="match status" value="1"/>
</dbReference>
<dbReference type="Pfam" id="PF01467">
    <property type="entry name" value="CTP_transf_like"/>
    <property type="match status" value="1"/>
</dbReference>
<dbReference type="SUPFAM" id="SSF52374">
    <property type="entry name" value="Nucleotidylyl transferase"/>
    <property type="match status" value="1"/>
</dbReference>
<protein>
    <recommendedName>
        <fullName evidence="1">Nicotinamide-nucleotide adenylyltransferase</fullName>
        <ecNumber evidence="1">2.7.7.1</ecNumber>
    </recommendedName>
    <alternativeName>
        <fullName evidence="1">NAD(+) diphosphorylase</fullName>
    </alternativeName>
    <alternativeName>
        <fullName evidence="1">NAD(+) pyrophosphorylase</fullName>
    </alternativeName>
    <alternativeName>
        <fullName evidence="1">NMN adenylyltransferase</fullName>
    </alternativeName>
</protein>
<comment type="catalytic activity">
    <reaction evidence="1">
        <text>beta-nicotinamide D-ribonucleotide + ATP + H(+) = diphosphate + NAD(+)</text>
        <dbReference type="Rhea" id="RHEA:21360"/>
        <dbReference type="ChEBI" id="CHEBI:14649"/>
        <dbReference type="ChEBI" id="CHEBI:15378"/>
        <dbReference type="ChEBI" id="CHEBI:30616"/>
        <dbReference type="ChEBI" id="CHEBI:33019"/>
        <dbReference type="ChEBI" id="CHEBI:57540"/>
        <dbReference type="EC" id="2.7.7.1"/>
    </reaction>
</comment>
<comment type="pathway">
    <text evidence="1">Cofactor biosynthesis; NAD(+) biosynthesis; NAD(+) from nicotinamide D-ribonucleotide: step 1/1.</text>
</comment>
<comment type="subcellular location">
    <subcellularLocation>
        <location evidence="1">Cytoplasm</location>
    </subcellularLocation>
</comment>
<comment type="similarity">
    <text evidence="1">Belongs to the archaeal NMN adenylyltransferase family.</text>
</comment>
<evidence type="ECO:0000255" key="1">
    <source>
        <dbReference type="HAMAP-Rule" id="MF_00243"/>
    </source>
</evidence>
<evidence type="ECO:0000256" key="2">
    <source>
        <dbReference type="SAM" id="MobiDB-lite"/>
    </source>
</evidence>
<sequence>MRGFYIGRFQPYHNGHHSMVERISEEVDELVLGIGSADDSHTTHDPFTAGERIMMITKAVAEYDLTTYVVPLEDINRNAVWVSHVESMCPDFDVAYSNNPLVVRLFEEAGIEVRQSPMFDRDRLEGSEIRQRMIDDESWRDRVPASVVEVIEEIHGIKRLQHVSDSDSLERYAATGESLPESLDDLDD</sequence>
<reference key="1">
    <citation type="journal article" date="2004" name="Genome Res.">
        <title>Genome sequence of Haloarcula marismortui: a halophilic archaeon from the Dead Sea.</title>
        <authorList>
            <person name="Baliga N.S."/>
            <person name="Bonneau R."/>
            <person name="Facciotti M.T."/>
            <person name="Pan M."/>
            <person name="Glusman G."/>
            <person name="Deutsch E.W."/>
            <person name="Shannon P."/>
            <person name="Chiu Y."/>
            <person name="Weng R.S."/>
            <person name="Gan R.R."/>
            <person name="Hung P."/>
            <person name="Date S.V."/>
            <person name="Marcotte E."/>
            <person name="Hood L."/>
            <person name="Ng W.V."/>
        </authorList>
    </citation>
    <scope>NUCLEOTIDE SEQUENCE [LARGE SCALE GENOMIC DNA]</scope>
    <source>
        <strain>ATCC 43049 / DSM 3752 / JCM 8966 / VKM B-1809</strain>
    </source>
</reference>